<dbReference type="EC" id="2.5.1.145" evidence="1"/>
<dbReference type="EMBL" id="AE017333">
    <property type="protein sequence ID" value="AAU42563.1"/>
    <property type="molecule type" value="Genomic_DNA"/>
</dbReference>
<dbReference type="EMBL" id="CP000002">
    <property type="protein sequence ID" value="AAU25192.1"/>
    <property type="molecule type" value="Genomic_DNA"/>
</dbReference>
<dbReference type="RefSeq" id="WP_003185621.1">
    <property type="nucleotide sequence ID" value="NC_006322.1"/>
</dbReference>
<dbReference type="SMR" id="Q65EF1"/>
<dbReference type="STRING" id="279010.BL03402"/>
<dbReference type="GeneID" id="92859678"/>
<dbReference type="KEGG" id="bld:BLi03745"/>
<dbReference type="KEGG" id="bli:BL03402"/>
<dbReference type="PATRIC" id="fig|279010.13.peg.3810"/>
<dbReference type="eggNOG" id="COG0682">
    <property type="taxonomic scope" value="Bacteria"/>
</dbReference>
<dbReference type="HOGENOM" id="CLU_013386_1_2_9"/>
<dbReference type="UniPathway" id="UPA00664"/>
<dbReference type="Proteomes" id="UP000000606">
    <property type="component" value="Chromosome"/>
</dbReference>
<dbReference type="GO" id="GO:0005886">
    <property type="term" value="C:plasma membrane"/>
    <property type="evidence" value="ECO:0007669"/>
    <property type="project" value="UniProtKB-SubCell"/>
</dbReference>
<dbReference type="GO" id="GO:0008961">
    <property type="term" value="F:phosphatidylglycerol-prolipoprotein diacylglyceryl transferase activity"/>
    <property type="evidence" value="ECO:0007669"/>
    <property type="project" value="UniProtKB-UniRule"/>
</dbReference>
<dbReference type="GO" id="GO:0042158">
    <property type="term" value="P:lipoprotein biosynthetic process"/>
    <property type="evidence" value="ECO:0007669"/>
    <property type="project" value="UniProtKB-UniRule"/>
</dbReference>
<dbReference type="HAMAP" id="MF_01147">
    <property type="entry name" value="Lgt"/>
    <property type="match status" value="1"/>
</dbReference>
<dbReference type="InterPro" id="IPR001640">
    <property type="entry name" value="Lgt"/>
</dbReference>
<dbReference type="NCBIfam" id="TIGR00544">
    <property type="entry name" value="lgt"/>
    <property type="match status" value="1"/>
</dbReference>
<dbReference type="PANTHER" id="PTHR30589:SF0">
    <property type="entry name" value="PHOSPHATIDYLGLYCEROL--PROLIPOPROTEIN DIACYLGLYCERYL TRANSFERASE"/>
    <property type="match status" value="1"/>
</dbReference>
<dbReference type="PANTHER" id="PTHR30589">
    <property type="entry name" value="PROLIPOPROTEIN DIACYLGLYCERYL TRANSFERASE"/>
    <property type="match status" value="1"/>
</dbReference>
<dbReference type="Pfam" id="PF01790">
    <property type="entry name" value="LGT"/>
    <property type="match status" value="1"/>
</dbReference>
<dbReference type="PROSITE" id="PS01311">
    <property type="entry name" value="LGT"/>
    <property type="match status" value="1"/>
</dbReference>
<gene>
    <name evidence="1" type="primary">lgt</name>
    <name type="ordered locus">BLi03745</name>
    <name type="ordered locus">BL03402</name>
</gene>
<feature type="chain" id="PRO_0000172554" description="Phosphatidylglycerol--prolipoprotein diacylglyceryl transferase">
    <location>
        <begin position="1"/>
        <end position="270"/>
    </location>
</feature>
<feature type="transmembrane region" description="Helical" evidence="1">
    <location>
        <begin position="18"/>
        <end position="38"/>
    </location>
</feature>
<feature type="transmembrane region" description="Helical" evidence="1">
    <location>
        <begin position="55"/>
        <end position="75"/>
    </location>
</feature>
<feature type="transmembrane region" description="Helical" evidence="1">
    <location>
        <begin position="89"/>
        <end position="109"/>
    </location>
</feature>
<feature type="transmembrane region" description="Helical" evidence="1">
    <location>
        <begin position="115"/>
        <end position="135"/>
    </location>
</feature>
<feature type="transmembrane region" description="Helical" evidence="1">
    <location>
        <begin position="177"/>
        <end position="197"/>
    </location>
</feature>
<feature type="transmembrane region" description="Helical" evidence="1">
    <location>
        <begin position="205"/>
        <end position="225"/>
    </location>
</feature>
<feature type="transmembrane region" description="Helical" evidence="1">
    <location>
        <begin position="236"/>
        <end position="256"/>
    </location>
</feature>
<feature type="binding site" evidence="1">
    <location>
        <position position="137"/>
    </location>
    <ligand>
        <name>a 1,2-diacyl-sn-glycero-3-phospho-(1'-sn-glycerol)</name>
        <dbReference type="ChEBI" id="CHEBI:64716"/>
    </ligand>
</feature>
<organism>
    <name type="scientific">Bacillus licheniformis (strain ATCC 14580 / DSM 13 / JCM 2505 / CCUG 7422 / NBRC 12200 / NCIMB 9375 / NCTC 10341 / NRRL NRS-1264 / Gibson 46)</name>
    <dbReference type="NCBI Taxonomy" id="279010"/>
    <lineage>
        <taxon>Bacteria</taxon>
        <taxon>Bacillati</taxon>
        <taxon>Bacillota</taxon>
        <taxon>Bacilli</taxon>
        <taxon>Bacillales</taxon>
        <taxon>Bacillaceae</taxon>
        <taxon>Bacillus</taxon>
    </lineage>
</organism>
<accession>Q65EF1</accession>
<accession>Q62PW9</accession>
<reference key="1">
    <citation type="journal article" date="2004" name="J. Mol. Microbiol. Biotechnol.">
        <title>The complete genome sequence of Bacillus licheniformis DSM13, an organism with great industrial potential.</title>
        <authorList>
            <person name="Veith B."/>
            <person name="Herzberg C."/>
            <person name="Steckel S."/>
            <person name="Feesche J."/>
            <person name="Maurer K.H."/>
            <person name="Ehrenreich P."/>
            <person name="Baeumer S."/>
            <person name="Henne A."/>
            <person name="Liesegang H."/>
            <person name="Merkl R."/>
            <person name="Ehrenreich A."/>
            <person name="Gottschalk G."/>
        </authorList>
    </citation>
    <scope>NUCLEOTIDE SEQUENCE [LARGE SCALE GENOMIC DNA]</scope>
    <source>
        <strain>ATCC 14580 / DSM 13 / JCM 2505 / CCUG 7422 / NBRC 12200 / NCIMB 9375 / NCTC 10341 / NRRL NRS-1264 / Gibson 46</strain>
    </source>
</reference>
<reference key="2">
    <citation type="journal article" date="2004" name="Genome Biol.">
        <title>Complete genome sequence of the industrial bacterium Bacillus licheniformis and comparisons with closely related Bacillus species.</title>
        <authorList>
            <person name="Rey M.W."/>
            <person name="Ramaiya P."/>
            <person name="Nelson B.A."/>
            <person name="Brody-Karpin S.D."/>
            <person name="Zaretsky E.J."/>
            <person name="Tang M."/>
            <person name="Lopez de Leon A."/>
            <person name="Xiang H."/>
            <person name="Gusti V."/>
            <person name="Clausen I.G."/>
            <person name="Olsen P.B."/>
            <person name="Rasmussen M.D."/>
            <person name="Andersen J.T."/>
            <person name="Joergensen P.L."/>
            <person name="Larsen T.S."/>
            <person name="Sorokin A."/>
            <person name="Bolotin A."/>
            <person name="Lapidus A."/>
            <person name="Galleron N."/>
            <person name="Ehrlich S.D."/>
            <person name="Berka R.M."/>
        </authorList>
    </citation>
    <scope>NUCLEOTIDE SEQUENCE [LARGE SCALE GENOMIC DNA]</scope>
    <source>
        <strain>ATCC 14580 / DSM 13 / JCM 2505 / CCUG 7422 / NBRC 12200 / NCIMB 9375 / NCTC 10341 / NRRL NRS-1264 / Gibson 46</strain>
    </source>
</reference>
<sequence>MNETIEPLNPIAFQLGPIAVHWYGIIIGLGALLGLWLAVREGERRGLHKDTFVDLVLFAIPIAILCARAYYVIFQWGYYSEHPDQIIQIWNGGLAIHGGLIGAVLTGIIYAKVKGLSFWKLADIAAPSILLGQAIGRWGNFMNQEAHGEAVSRAFLENLHLPDFIINQMYIDGQYYQPTFLYESLWSFTGVVVLLLLRKANLKRGELFLIYVIWYSMGRYFIEGLRTDSLMLTENLRIAQVISIVLILCAAALIAYRRFKGREIKRYQEM</sequence>
<keyword id="KW-1003">Cell membrane</keyword>
<keyword id="KW-0472">Membrane</keyword>
<keyword id="KW-1185">Reference proteome</keyword>
<keyword id="KW-0808">Transferase</keyword>
<keyword id="KW-0812">Transmembrane</keyword>
<keyword id="KW-1133">Transmembrane helix</keyword>
<proteinExistence type="inferred from homology"/>
<protein>
    <recommendedName>
        <fullName evidence="1">Phosphatidylglycerol--prolipoprotein diacylglyceryl transferase</fullName>
        <ecNumber evidence="1">2.5.1.145</ecNumber>
    </recommendedName>
</protein>
<name>LGT_BACLD</name>
<evidence type="ECO:0000255" key="1">
    <source>
        <dbReference type="HAMAP-Rule" id="MF_01147"/>
    </source>
</evidence>
<comment type="function">
    <text evidence="1">Catalyzes the transfer of the diacylglyceryl group from phosphatidylglycerol to the sulfhydryl group of the N-terminal cysteine of a prolipoprotein, the first step in the formation of mature lipoproteins.</text>
</comment>
<comment type="catalytic activity">
    <reaction evidence="1">
        <text>L-cysteinyl-[prolipoprotein] + a 1,2-diacyl-sn-glycero-3-phospho-(1'-sn-glycerol) = an S-1,2-diacyl-sn-glyceryl-L-cysteinyl-[prolipoprotein] + sn-glycerol 1-phosphate + H(+)</text>
        <dbReference type="Rhea" id="RHEA:56712"/>
        <dbReference type="Rhea" id="RHEA-COMP:14679"/>
        <dbReference type="Rhea" id="RHEA-COMP:14680"/>
        <dbReference type="ChEBI" id="CHEBI:15378"/>
        <dbReference type="ChEBI" id="CHEBI:29950"/>
        <dbReference type="ChEBI" id="CHEBI:57685"/>
        <dbReference type="ChEBI" id="CHEBI:64716"/>
        <dbReference type="ChEBI" id="CHEBI:140658"/>
        <dbReference type="EC" id="2.5.1.145"/>
    </reaction>
</comment>
<comment type="pathway">
    <text evidence="1">Protein modification; lipoprotein biosynthesis (diacylglyceryl transfer).</text>
</comment>
<comment type="subcellular location">
    <subcellularLocation>
        <location evidence="1">Cell membrane</location>
        <topology evidence="1">Multi-pass membrane protein</topology>
    </subcellularLocation>
</comment>
<comment type="similarity">
    <text evidence="1">Belongs to the Lgt family.</text>
</comment>